<proteinExistence type="inferred from homology"/>
<dbReference type="EMBL" id="CP000968">
    <property type="protein sequence ID" value="ACB07936.1"/>
    <property type="molecule type" value="Genomic_DNA"/>
</dbReference>
<dbReference type="RefSeq" id="WP_012309833.1">
    <property type="nucleotide sequence ID" value="NC_010482.1"/>
</dbReference>
<dbReference type="SMR" id="B1L657"/>
<dbReference type="FunCoup" id="B1L657">
    <property type="interactions" value="78"/>
</dbReference>
<dbReference type="STRING" id="374847.Kcr_1190"/>
<dbReference type="EnsemblBacteria" id="ACB07936">
    <property type="protein sequence ID" value="ACB07936"/>
    <property type="gene ID" value="Kcr_1190"/>
</dbReference>
<dbReference type="GeneID" id="6094467"/>
<dbReference type="KEGG" id="kcr:Kcr_1190"/>
<dbReference type="eggNOG" id="arCOG01885">
    <property type="taxonomic scope" value="Archaea"/>
</dbReference>
<dbReference type="HOGENOM" id="CLU_176720_1_0_2"/>
<dbReference type="InParanoid" id="B1L657"/>
<dbReference type="OrthoDB" id="52479at2157"/>
<dbReference type="PhylomeDB" id="B1L657"/>
<dbReference type="Proteomes" id="UP000001686">
    <property type="component" value="Chromosome"/>
</dbReference>
<dbReference type="GO" id="GO:1990904">
    <property type="term" value="C:ribonucleoprotein complex"/>
    <property type="evidence" value="ECO:0007669"/>
    <property type="project" value="UniProtKB-KW"/>
</dbReference>
<dbReference type="GO" id="GO:0005840">
    <property type="term" value="C:ribosome"/>
    <property type="evidence" value="ECO:0007669"/>
    <property type="project" value="UniProtKB-KW"/>
</dbReference>
<dbReference type="GO" id="GO:0003735">
    <property type="term" value="F:structural constituent of ribosome"/>
    <property type="evidence" value="ECO:0007669"/>
    <property type="project" value="InterPro"/>
</dbReference>
<dbReference type="GO" id="GO:0006412">
    <property type="term" value="P:translation"/>
    <property type="evidence" value="ECO:0007669"/>
    <property type="project" value="UniProtKB-UniRule"/>
</dbReference>
<dbReference type="Gene3D" id="1.10.60.20">
    <property type="entry name" value="Ribosomal protein S17e-like"/>
    <property type="match status" value="1"/>
</dbReference>
<dbReference type="HAMAP" id="MF_00511">
    <property type="entry name" value="Ribosomal_eS17"/>
    <property type="match status" value="1"/>
</dbReference>
<dbReference type="InterPro" id="IPR001210">
    <property type="entry name" value="Ribosomal_eS17"/>
</dbReference>
<dbReference type="InterPro" id="IPR036401">
    <property type="entry name" value="Ribosomal_eS17_sf"/>
</dbReference>
<dbReference type="NCBIfam" id="NF002242">
    <property type="entry name" value="PRK01151.1"/>
    <property type="match status" value="1"/>
</dbReference>
<dbReference type="PANTHER" id="PTHR10732">
    <property type="entry name" value="40S RIBOSOMAL PROTEIN S17"/>
    <property type="match status" value="1"/>
</dbReference>
<dbReference type="PANTHER" id="PTHR10732:SF0">
    <property type="entry name" value="40S RIBOSOMAL PROTEIN S17"/>
    <property type="match status" value="1"/>
</dbReference>
<dbReference type="Pfam" id="PF00833">
    <property type="entry name" value="Ribosomal_S17e"/>
    <property type="match status" value="1"/>
</dbReference>
<dbReference type="SUPFAM" id="SSF116820">
    <property type="entry name" value="Rps17e-like"/>
    <property type="match status" value="1"/>
</dbReference>
<gene>
    <name evidence="1" type="primary">rps17e</name>
    <name type="ordered locus">Kcr_1190</name>
</gene>
<evidence type="ECO:0000255" key="1">
    <source>
        <dbReference type="HAMAP-Rule" id="MF_00511"/>
    </source>
</evidence>
<evidence type="ECO:0000305" key="2"/>
<reference key="1">
    <citation type="journal article" date="2008" name="Proc. Natl. Acad. Sci. U.S.A.">
        <title>A korarchaeal genome reveals new insights into the evolution of the Archaea.</title>
        <authorList>
            <person name="Elkins J.G."/>
            <person name="Podar M."/>
            <person name="Graham D.E."/>
            <person name="Makarova K.S."/>
            <person name="Wolf Y."/>
            <person name="Randau L."/>
            <person name="Hedlund B.P."/>
            <person name="Brochier-Armanet C."/>
            <person name="Kunin V."/>
            <person name="Anderson I."/>
            <person name="Lapidus A."/>
            <person name="Goltsman E."/>
            <person name="Barry K."/>
            <person name="Koonin E.V."/>
            <person name="Hugenholtz P."/>
            <person name="Kyrpides N."/>
            <person name="Wanner G."/>
            <person name="Richardson P."/>
            <person name="Keller M."/>
            <person name="Stetter K.O."/>
        </authorList>
    </citation>
    <scope>NUCLEOTIDE SEQUENCE [LARGE SCALE GENOMIC DNA]</scope>
    <source>
        <strain>OPF8</strain>
    </source>
</reference>
<name>RS17E_KORCO</name>
<comment type="similarity">
    <text evidence="1">Belongs to the eukaryotic ribosomal protein eS17 family.</text>
</comment>
<organism>
    <name type="scientific">Korarchaeum cryptofilum (strain OPF8)</name>
    <dbReference type="NCBI Taxonomy" id="374847"/>
    <lineage>
        <taxon>Archaea</taxon>
        <taxon>Thermoproteota</taxon>
        <taxon>Candidatus Korarchaeia</taxon>
        <taxon>Candidatus Korarchaeales</taxon>
        <taxon>Candidatus Korarchaeaceae</taxon>
        <taxon>Candidatus Korarchaeum</taxon>
    </lineage>
</organism>
<keyword id="KW-1185">Reference proteome</keyword>
<keyword id="KW-0687">Ribonucleoprotein</keyword>
<keyword id="KW-0689">Ribosomal protein</keyword>
<feature type="chain" id="PRO_1000127256" description="Small ribosomal subunit protein eS17">
    <location>
        <begin position="1"/>
        <end position="67"/>
    </location>
</feature>
<accession>B1L657</accession>
<protein>
    <recommendedName>
        <fullName evidence="1">Small ribosomal subunit protein eS17</fullName>
    </recommendedName>
    <alternativeName>
        <fullName evidence="2">30S ribosomal protein S17e</fullName>
    </alternativeName>
</protein>
<sequence>MGTVRERAIKRVAYKLVKQYPDLWTEDFEHNKMILSQIAEIKSKVYRNRIAGYITRLKVRERQGTLV</sequence>